<sequence length="965" mass="107565">MEGKVFLGHNLIWVMLLMGQLHGYKSCIDEEKIALFELRKHMISRTESESVLPTWTNDTTSDCCRWKGVACNRVSGRVTEISFGGLSLKDNSLLNLSLLHPFEDVRSLNLSSSRCSGLFDDVEGYKSLRKLRKLEILDLASNKFNNSIFHFLSAATSLTTLFLRSNNMDGSFPAKELRDLTNLELLDLSRNRFNGSIPIQELSSLRKLKALDLSGNEFSGSMELQGKFCTDLLFSIQSGICELNNMQELDLSQNKLVGHLPSCLTSLTGLRVLDLSSNKLTGTVPSSLGSLQSLEYLSLFDNDFEGSFSFGSLANLSNLMVLKLCSKSSSLQVLSESSWKPKFQLSVIALRSCNMEKVPHFLLHQKDLRHVDLSDNNISGKLPSWLLANNTKLKVLLLQNNLFTSFQIPKSAHNLLFLDVSANDFNHLFPENIGWIFPHLRYLNTSKNNFQENLPSSLGNMNGIQYMDLSRNSFHGNLPRSFVNGCYSMAILKLSHNKLSGEIFPESTNFTNILGLFMDNNLFTGKIGQGLRSLINLELLDMSNNNLTGVIPSWIGELPSLTALLISDNFLKGDIPMSLFNKSSLQLLDLSANSLSGVIPPQHDSRNGVVLLLQDNKLSGTIPDTLLANVEILDLRNNRFSGKIPEFINIQNISILLLRGNNFTGQIPHQLCGLSNIQLLDLSNNRLNGTIPSCLSNTSFGFGKECTSYDYDFGISFPSDVFNGFSLHQDFSSNKNGGIYFKSLLTLDPLSMDYKAATQTKIEFATKHRYDAYMGGNLKLLFGMDLSENELSGEIPVEFGGLLELRALNLSHNNLSGVIPKSISSMEKMESFDLSFNRLQGRIPSQLTELTSLSVFKVSHNNLSGVIPQGRQFNTFDAESYFGNRLLCGQPTNRSCNNNSYEEADNGVEADESIIDMVSFYLSFAAAYVTILIGILASLSFDSPWSRFWFYKVDAFIKKVRNLLL</sequence>
<keyword id="KW-1003">Cell membrane</keyword>
<keyword id="KW-0325">Glycoprotein</keyword>
<keyword id="KW-0433">Leucine-rich repeat</keyword>
<keyword id="KW-0472">Membrane</keyword>
<keyword id="KW-0675">Receptor</keyword>
<keyword id="KW-1185">Reference proteome</keyword>
<keyword id="KW-0677">Repeat</keyword>
<keyword id="KW-0732">Signal</keyword>
<keyword id="KW-0812">Transmembrane</keyword>
<keyword id="KW-1133">Transmembrane helix</keyword>
<protein>
    <recommendedName>
        <fullName evidence="3">Receptor-like protein 15</fullName>
        <shortName evidence="3">AtRLP15</shortName>
    </recommendedName>
</protein>
<proteinExistence type="inferred from homology"/>
<evidence type="ECO:0000255" key="1"/>
<evidence type="ECO:0000255" key="2">
    <source>
        <dbReference type="PROSITE-ProRule" id="PRU00498"/>
    </source>
</evidence>
<evidence type="ECO:0000303" key="3">
    <source>
    </source>
</evidence>
<evidence type="ECO:0000305" key="4"/>
<evidence type="ECO:0000312" key="5">
    <source>
        <dbReference type="Araport" id="AT1G74190"/>
    </source>
</evidence>
<evidence type="ECO:0000312" key="6">
    <source>
        <dbReference type="EMBL" id="AAG51871.1"/>
    </source>
</evidence>
<dbReference type="EMBL" id="AC079678">
    <property type="protein sequence ID" value="AAG51871.1"/>
    <property type="molecule type" value="Genomic_DNA"/>
</dbReference>
<dbReference type="EMBL" id="CP002684">
    <property type="protein sequence ID" value="AEE35564.1"/>
    <property type="molecule type" value="Genomic_DNA"/>
</dbReference>
<dbReference type="RefSeq" id="NP_177559.1">
    <property type="nucleotide sequence ID" value="NM_106079.2"/>
</dbReference>
<dbReference type="SMR" id="Q9C6A8"/>
<dbReference type="STRING" id="3702.Q9C6A8"/>
<dbReference type="GlyCosmos" id="Q9C6A8">
    <property type="glycosylation" value="21 sites, No reported glycans"/>
</dbReference>
<dbReference type="GlyGen" id="Q9C6A8">
    <property type="glycosylation" value="21 sites"/>
</dbReference>
<dbReference type="PaxDb" id="3702-AT1G74190.1"/>
<dbReference type="EnsemblPlants" id="AT1G74190.1">
    <property type="protein sequence ID" value="AT1G74190.1"/>
    <property type="gene ID" value="AT1G74190"/>
</dbReference>
<dbReference type="GeneID" id="843759"/>
<dbReference type="Gramene" id="AT1G74190.1">
    <property type="protein sequence ID" value="AT1G74190.1"/>
    <property type="gene ID" value="AT1G74190"/>
</dbReference>
<dbReference type="KEGG" id="ath:AT1G74190"/>
<dbReference type="Araport" id="AT1G74190"/>
<dbReference type="TAIR" id="AT1G74190">
    <property type="gene designation" value="RLP15"/>
</dbReference>
<dbReference type="eggNOG" id="KOG0619">
    <property type="taxonomic scope" value="Eukaryota"/>
</dbReference>
<dbReference type="HOGENOM" id="CLU_000288_18_3_1"/>
<dbReference type="InParanoid" id="Q9C6A8"/>
<dbReference type="OMA" id="ETENPPW"/>
<dbReference type="PhylomeDB" id="Q9C6A8"/>
<dbReference type="PRO" id="PR:Q9C6A8"/>
<dbReference type="Proteomes" id="UP000006548">
    <property type="component" value="Chromosome 1"/>
</dbReference>
<dbReference type="ExpressionAtlas" id="Q9C6A8">
    <property type="expression patterns" value="baseline and differential"/>
</dbReference>
<dbReference type="GO" id="GO:0005886">
    <property type="term" value="C:plasma membrane"/>
    <property type="evidence" value="ECO:0007669"/>
    <property type="project" value="UniProtKB-SubCell"/>
</dbReference>
<dbReference type="FunFam" id="3.80.10.10:FF:000233">
    <property type="entry name" value="Leucine-rich repeat receptor-like protein kinase TDR"/>
    <property type="match status" value="1"/>
</dbReference>
<dbReference type="FunFam" id="3.80.10.10:FF:000041">
    <property type="entry name" value="LRR receptor-like serine/threonine-protein kinase ERECTA"/>
    <property type="match status" value="2"/>
</dbReference>
<dbReference type="FunFam" id="3.80.10.10:FF:000213">
    <property type="entry name" value="Tyrosine-sulfated glycopeptide receptor 1"/>
    <property type="match status" value="1"/>
</dbReference>
<dbReference type="Gene3D" id="3.80.10.10">
    <property type="entry name" value="Ribonuclease Inhibitor"/>
    <property type="match status" value="4"/>
</dbReference>
<dbReference type="InterPro" id="IPR001611">
    <property type="entry name" value="Leu-rich_rpt"/>
</dbReference>
<dbReference type="InterPro" id="IPR003591">
    <property type="entry name" value="Leu-rich_rpt_typical-subtyp"/>
</dbReference>
<dbReference type="InterPro" id="IPR032675">
    <property type="entry name" value="LRR_dom_sf"/>
</dbReference>
<dbReference type="InterPro" id="IPR013210">
    <property type="entry name" value="LRR_N_plant-typ"/>
</dbReference>
<dbReference type="InterPro" id="IPR051502">
    <property type="entry name" value="RLP_Defense_Trigger"/>
</dbReference>
<dbReference type="PANTHER" id="PTHR48062">
    <property type="entry name" value="RECEPTOR-LIKE PROTEIN 14"/>
    <property type="match status" value="1"/>
</dbReference>
<dbReference type="PANTHER" id="PTHR48062:SF7">
    <property type="entry name" value="RECEPTOR-LIKE PROTEIN 15"/>
    <property type="match status" value="1"/>
</dbReference>
<dbReference type="Pfam" id="PF00560">
    <property type="entry name" value="LRR_1"/>
    <property type="match status" value="8"/>
</dbReference>
<dbReference type="Pfam" id="PF13855">
    <property type="entry name" value="LRR_8"/>
    <property type="match status" value="2"/>
</dbReference>
<dbReference type="Pfam" id="PF08263">
    <property type="entry name" value="LRRNT_2"/>
    <property type="match status" value="1"/>
</dbReference>
<dbReference type="PRINTS" id="PR00019">
    <property type="entry name" value="LEURICHRPT"/>
</dbReference>
<dbReference type="SMART" id="SM00365">
    <property type="entry name" value="LRR_SD22"/>
    <property type="match status" value="6"/>
</dbReference>
<dbReference type="SMART" id="SM00369">
    <property type="entry name" value="LRR_TYP"/>
    <property type="match status" value="11"/>
</dbReference>
<dbReference type="SUPFAM" id="SSF52058">
    <property type="entry name" value="L domain-like"/>
    <property type="match status" value="2"/>
</dbReference>
<dbReference type="SUPFAM" id="SSF52047">
    <property type="entry name" value="RNI-like"/>
    <property type="match status" value="1"/>
</dbReference>
<name>RLP15_ARATH</name>
<comment type="subcellular location">
    <subcellularLocation>
        <location evidence="4">Cell membrane</location>
        <topology evidence="4">Single-pass type I membrane protein</topology>
    </subcellularLocation>
</comment>
<comment type="similarity">
    <text evidence="4">Belongs to the RLP family.</text>
</comment>
<reference key="1">
    <citation type="journal article" date="2000" name="Nature">
        <title>Sequence and analysis of chromosome 1 of the plant Arabidopsis thaliana.</title>
        <authorList>
            <person name="Theologis A."/>
            <person name="Ecker J.R."/>
            <person name="Palm C.J."/>
            <person name="Federspiel N.A."/>
            <person name="Kaul S."/>
            <person name="White O."/>
            <person name="Alonso J."/>
            <person name="Altafi H."/>
            <person name="Araujo R."/>
            <person name="Bowman C.L."/>
            <person name="Brooks S.Y."/>
            <person name="Buehler E."/>
            <person name="Chan A."/>
            <person name="Chao Q."/>
            <person name="Chen H."/>
            <person name="Cheuk R.F."/>
            <person name="Chin C.W."/>
            <person name="Chung M.K."/>
            <person name="Conn L."/>
            <person name="Conway A.B."/>
            <person name="Conway A.R."/>
            <person name="Creasy T.H."/>
            <person name="Dewar K."/>
            <person name="Dunn P."/>
            <person name="Etgu P."/>
            <person name="Feldblyum T.V."/>
            <person name="Feng J.-D."/>
            <person name="Fong B."/>
            <person name="Fujii C.Y."/>
            <person name="Gill J.E."/>
            <person name="Goldsmith A.D."/>
            <person name="Haas B."/>
            <person name="Hansen N.F."/>
            <person name="Hughes B."/>
            <person name="Huizar L."/>
            <person name="Hunter J.L."/>
            <person name="Jenkins J."/>
            <person name="Johnson-Hopson C."/>
            <person name="Khan S."/>
            <person name="Khaykin E."/>
            <person name="Kim C.J."/>
            <person name="Koo H.L."/>
            <person name="Kremenetskaia I."/>
            <person name="Kurtz D.B."/>
            <person name="Kwan A."/>
            <person name="Lam B."/>
            <person name="Langin-Hooper S."/>
            <person name="Lee A."/>
            <person name="Lee J.M."/>
            <person name="Lenz C.A."/>
            <person name="Li J.H."/>
            <person name="Li Y.-P."/>
            <person name="Lin X."/>
            <person name="Liu S.X."/>
            <person name="Liu Z.A."/>
            <person name="Luros J.S."/>
            <person name="Maiti R."/>
            <person name="Marziali A."/>
            <person name="Militscher J."/>
            <person name="Miranda M."/>
            <person name="Nguyen M."/>
            <person name="Nierman W.C."/>
            <person name="Osborne B.I."/>
            <person name="Pai G."/>
            <person name="Peterson J."/>
            <person name="Pham P.K."/>
            <person name="Rizzo M."/>
            <person name="Rooney T."/>
            <person name="Rowley D."/>
            <person name="Sakano H."/>
            <person name="Salzberg S.L."/>
            <person name="Schwartz J.R."/>
            <person name="Shinn P."/>
            <person name="Southwick A.M."/>
            <person name="Sun H."/>
            <person name="Tallon L.J."/>
            <person name="Tambunga G."/>
            <person name="Toriumi M.J."/>
            <person name="Town C.D."/>
            <person name="Utterback T."/>
            <person name="Van Aken S."/>
            <person name="Vaysberg M."/>
            <person name="Vysotskaia V.S."/>
            <person name="Walker M."/>
            <person name="Wu D."/>
            <person name="Yu G."/>
            <person name="Fraser C.M."/>
            <person name="Venter J.C."/>
            <person name="Davis R.W."/>
        </authorList>
    </citation>
    <scope>NUCLEOTIDE SEQUENCE [LARGE SCALE GENOMIC DNA]</scope>
    <source>
        <strain>cv. Columbia</strain>
    </source>
</reference>
<reference key="2">
    <citation type="journal article" date="2017" name="Plant J.">
        <title>Araport11: a complete reannotation of the Arabidopsis thaliana reference genome.</title>
        <authorList>
            <person name="Cheng C.Y."/>
            <person name="Krishnakumar V."/>
            <person name="Chan A.P."/>
            <person name="Thibaud-Nissen F."/>
            <person name="Schobel S."/>
            <person name="Town C.D."/>
        </authorList>
    </citation>
    <scope>GENOME REANNOTATION</scope>
    <source>
        <strain>cv. Columbia</strain>
    </source>
</reference>
<reference key="3">
    <citation type="journal article" date="2005" name="Plant Physiol.">
        <title>Phylogenomic analysis of the receptor-like proteins of rice and Arabidopsis.</title>
        <authorList>
            <person name="Fritz-Laylin L.K."/>
            <person name="Krishnamurthy N."/>
            <person name="Toer M."/>
            <person name="Sjoelander K.V."/>
            <person name="Jones J.D."/>
        </authorList>
    </citation>
    <scope>GENE FAMILY</scope>
</reference>
<reference key="4">
    <citation type="journal article" date="2008" name="Plant Physiol.">
        <title>A genome-wide functional investigation into the roles of receptor-like proteins in Arabidopsis.</title>
        <authorList>
            <person name="Wang G."/>
            <person name="Ellendorff U."/>
            <person name="Kemp B."/>
            <person name="Mansfield J.W."/>
            <person name="Forsyth A."/>
            <person name="Mitchell K."/>
            <person name="Bastas K."/>
            <person name="Liu C.-M."/>
            <person name="Woods-Toer A."/>
            <person name="Zipfel C."/>
            <person name="de Wit P.J.G.M."/>
            <person name="Jones J.D.G."/>
            <person name="Toer M."/>
            <person name="Thomma B.P.H.J."/>
        </authorList>
    </citation>
    <scope>GENE FAMILY</scope>
    <scope>NOMENCLATURE</scope>
</reference>
<accession>Q9C6A8</accession>
<gene>
    <name evidence="3" type="primary">RLP15</name>
    <name evidence="5" type="ordered locus">At1g74190</name>
    <name evidence="6" type="ORF">F9E11.4</name>
</gene>
<feature type="signal peptide" evidence="1">
    <location>
        <begin position="1"/>
        <end position="23"/>
    </location>
</feature>
<feature type="chain" id="PRO_5011950698" description="Receptor-like protein 15">
    <location>
        <begin position="24"/>
        <end position="965"/>
    </location>
</feature>
<feature type="topological domain" description="Extracellular" evidence="1">
    <location>
        <begin position="24"/>
        <end position="916"/>
    </location>
</feature>
<feature type="transmembrane region" description="Helical" evidence="1">
    <location>
        <begin position="917"/>
        <end position="937"/>
    </location>
</feature>
<feature type="topological domain" description="Cytoplasmic" evidence="1">
    <location>
        <begin position="938"/>
        <end position="965"/>
    </location>
</feature>
<feature type="repeat" description="LRR 1" evidence="1">
    <location>
        <begin position="80"/>
        <end position="102"/>
    </location>
</feature>
<feature type="repeat" description="LRR 2" evidence="1">
    <location>
        <begin position="103"/>
        <end position="127"/>
    </location>
</feature>
<feature type="repeat" description="LRR 3" evidence="1">
    <location>
        <begin position="131"/>
        <end position="154"/>
    </location>
</feature>
<feature type="repeat" description="LRR 4" evidence="1">
    <location>
        <begin position="156"/>
        <end position="179"/>
    </location>
</feature>
<feature type="repeat" description="LRR 5" evidence="1">
    <location>
        <begin position="180"/>
        <end position="204"/>
    </location>
</feature>
<feature type="repeat" description="LRR 6" evidence="1">
    <location>
        <begin position="206"/>
        <end position="230"/>
    </location>
</feature>
<feature type="repeat" description="LRR 7" evidence="1">
    <location>
        <begin position="243"/>
        <end position="267"/>
    </location>
</feature>
<feature type="repeat" description="LRR 8" evidence="1">
    <location>
        <begin position="268"/>
        <end position="290"/>
    </location>
</feature>
<feature type="repeat" description="LRR 9" evidence="1">
    <location>
        <begin position="292"/>
        <end position="315"/>
    </location>
</feature>
<feature type="repeat" description="LRR 10" evidence="1">
    <location>
        <begin position="316"/>
        <end position="341"/>
    </location>
</feature>
<feature type="repeat" description="LRR 11" evidence="1">
    <location>
        <begin position="342"/>
        <end position="365"/>
    </location>
</feature>
<feature type="repeat" description="LRR 12" evidence="1">
    <location>
        <begin position="366"/>
        <end position="389"/>
    </location>
</feature>
<feature type="repeat" description="LRR 13" evidence="1">
    <location>
        <begin position="391"/>
        <end position="415"/>
    </location>
</feature>
<feature type="repeat" description="LRR 14" evidence="1">
    <location>
        <begin position="417"/>
        <end position="435"/>
    </location>
</feature>
<feature type="repeat" description="LRR 15" evidence="1">
    <location>
        <begin position="437"/>
        <end position="461"/>
    </location>
</feature>
<feature type="repeat" description="LRR 16" evidence="1">
    <location>
        <begin position="462"/>
        <end position="485"/>
    </location>
</feature>
<feature type="repeat" description="LRR 17" evidence="1">
    <location>
        <begin position="487"/>
        <end position="512"/>
    </location>
</feature>
<feature type="repeat" description="LRR 18; degenerate" evidence="4">
    <location>
        <begin position="514"/>
        <end position="533"/>
    </location>
</feature>
<feature type="repeat" description="LRR 19" evidence="1">
    <location>
        <begin position="534"/>
        <end position="557"/>
    </location>
</feature>
<feature type="repeat" description="LRR 20" evidence="1">
    <location>
        <begin position="558"/>
        <end position="582"/>
    </location>
</feature>
<feature type="repeat" description="LRR 21" evidence="1">
    <location>
        <begin position="584"/>
        <end position="606"/>
    </location>
</feature>
<feature type="repeat" description="LRR 22" evidence="1">
    <location>
        <begin position="608"/>
        <end position="627"/>
    </location>
</feature>
<feature type="repeat" description="LRR 23" evidence="1">
    <location>
        <begin position="628"/>
        <end position="652"/>
    </location>
</feature>
<feature type="repeat" description="LRR 24" evidence="1">
    <location>
        <begin position="654"/>
        <end position="674"/>
    </location>
</feature>
<feature type="repeat" description="LRR 25" evidence="1">
    <location>
        <begin position="675"/>
        <end position="698"/>
    </location>
</feature>
<feature type="repeat" description="LRR 26" evidence="1">
    <location>
        <begin position="778"/>
        <end position="801"/>
    </location>
</feature>
<feature type="repeat" description="LRR 27" evidence="1">
    <location>
        <begin position="802"/>
        <end position="825"/>
    </location>
</feature>
<feature type="repeat" description="LRR 28" evidence="1">
    <location>
        <begin position="827"/>
        <end position="850"/>
    </location>
</feature>
<feature type="repeat" description="LRR 29" evidence="1">
    <location>
        <begin position="851"/>
        <end position="875"/>
    </location>
</feature>
<feature type="glycosylation site" description="N-linked (GlcNAc...) asparagine" evidence="2">
    <location>
        <position position="57"/>
    </location>
</feature>
<feature type="glycosylation site" description="N-linked (GlcNAc...) asparagine" evidence="2">
    <location>
        <position position="95"/>
    </location>
</feature>
<feature type="glycosylation site" description="N-linked (GlcNAc...) asparagine" evidence="2">
    <location>
        <position position="109"/>
    </location>
</feature>
<feature type="glycosylation site" description="N-linked (GlcNAc...) asparagine" evidence="2">
    <location>
        <position position="145"/>
    </location>
</feature>
<feature type="glycosylation site" description="N-linked (GlcNAc...) asparagine" evidence="2">
    <location>
        <position position="194"/>
    </location>
</feature>
<feature type="glycosylation site" description="N-linked (GlcNAc...) asparagine" evidence="2">
    <location>
        <position position="315"/>
    </location>
</feature>
<feature type="glycosylation site" description="N-linked (GlcNAc...) asparagine" evidence="2">
    <location>
        <position position="377"/>
    </location>
</feature>
<feature type="glycosylation site" description="N-linked (GlcNAc...) asparagine" evidence="2">
    <location>
        <position position="389"/>
    </location>
</feature>
<feature type="glycosylation site" description="N-linked (GlcNAc...) asparagine" evidence="2">
    <location>
        <position position="444"/>
    </location>
</feature>
<feature type="glycosylation site" description="N-linked (GlcNAc...) asparagine" evidence="2">
    <location>
        <position position="509"/>
    </location>
</feature>
<feature type="glycosylation site" description="N-linked (GlcNAc...) asparagine" evidence="2">
    <location>
        <position position="546"/>
    </location>
</feature>
<feature type="glycosylation site" description="N-linked (GlcNAc...) asparagine" evidence="2">
    <location>
        <position position="581"/>
    </location>
</feature>
<feature type="glycosylation site" description="N-linked (GlcNAc...) asparagine" evidence="2">
    <location>
        <position position="652"/>
    </location>
</feature>
<feature type="glycosylation site" description="N-linked (GlcNAc...) asparagine" evidence="2">
    <location>
        <position position="662"/>
    </location>
</feature>
<feature type="glycosylation site" description="N-linked (GlcNAc...) asparagine" evidence="2">
    <location>
        <position position="688"/>
    </location>
</feature>
<feature type="glycosylation site" description="N-linked (GlcNAc...) asparagine" evidence="2">
    <location>
        <position position="697"/>
    </location>
</feature>
<feature type="glycosylation site" description="N-linked (GlcNAc...) asparagine" evidence="2">
    <location>
        <position position="809"/>
    </location>
</feature>
<feature type="glycosylation site" description="N-linked (GlcNAc...) asparagine" evidence="2">
    <location>
        <position position="814"/>
    </location>
</feature>
<feature type="glycosylation site" description="N-linked (GlcNAc...) asparagine" evidence="2">
    <location>
        <position position="862"/>
    </location>
</feature>
<feature type="glycosylation site" description="N-linked (GlcNAc...) asparagine" evidence="2">
    <location>
        <position position="893"/>
    </location>
</feature>
<feature type="glycosylation site" description="N-linked (GlcNAc...) asparagine" evidence="2">
    <location>
        <position position="898"/>
    </location>
</feature>
<organism>
    <name type="scientific">Arabidopsis thaliana</name>
    <name type="common">Mouse-ear cress</name>
    <dbReference type="NCBI Taxonomy" id="3702"/>
    <lineage>
        <taxon>Eukaryota</taxon>
        <taxon>Viridiplantae</taxon>
        <taxon>Streptophyta</taxon>
        <taxon>Embryophyta</taxon>
        <taxon>Tracheophyta</taxon>
        <taxon>Spermatophyta</taxon>
        <taxon>Magnoliopsida</taxon>
        <taxon>eudicotyledons</taxon>
        <taxon>Gunneridae</taxon>
        <taxon>Pentapetalae</taxon>
        <taxon>rosids</taxon>
        <taxon>malvids</taxon>
        <taxon>Brassicales</taxon>
        <taxon>Brassicaceae</taxon>
        <taxon>Camelineae</taxon>
        <taxon>Arabidopsis</taxon>
    </lineage>
</organism>